<keyword id="KW-0106">Calcium</keyword>
<keyword id="KW-1015">Disulfide bond</keyword>
<keyword id="KW-0256">Endoplasmic reticulum</keyword>
<keyword id="KW-0333">Golgi apparatus</keyword>
<keyword id="KW-0378">Hydrolase</keyword>
<keyword id="KW-0442">Lipid degradation</keyword>
<keyword id="KW-0443">Lipid metabolism</keyword>
<keyword id="KW-0479">Metal-binding</keyword>
<keyword id="KW-1185">Reference proteome</keyword>
<keyword id="KW-0964">Secreted</keyword>
<keyword id="KW-0732">Signal</keyword>
<gene>
    <name type="primary">PLA2-GAMMA</name>
    <name type="ordered locus">At4g29460</name>
    <name type="ORF">F17A13.280</name>
</gene>
<name>PLA2C_ARATH</name>
<dbReference type="EC" id="3.1.1.4"/>
<dbReference type="EMBL" id="AY148346">
    <property type="protein sequence ID" value="AAN63044.1"/>
    <property type="molecule type" value="mRNA"/>
</dbReference>
<dbReference type="EMBL" id="AL161575">
    <property type="protein sequence ID" value="CAB79704.1"/>
    <property type="molecule type" value="Genomic_DNA"/>
</dbReference>
<dbReference type="EMBL" id="CP002687">
    <property type="protein sequence ID" value="AEE85634.1"/>
    <property type="molecule type" value="Genomic_DNA"/>
</dbReference>
<dbReference type="PIR" id="G85343">
    <property type="entry name" value="G85343"/>
</dbReference>
<dbReference type="RefSeq" id="NP_194675.1">
    <property type="nucleotide sequence ID" value="NM_119091.3"/>
</dbReference>
<dbReference type="SMR" id="Q9M0D7"/>
<dbReference type="STRING" id="3702.Q9M0D7"/>
<dbReference type="PaxDb" id="3702-AT4G29460.1"/>
<dbReference type="EnsemblPlants" id="AT4G29460.1">
    <property type="protein sequence ID" value="AT4G29460.1"/>
    <property type="gene ID" value="AT4G29460"/>
</dbReference>
<dbReference type="GeneID" id="829067"/>
<dbReference type="Gramene" id="AT4G29460.1">
    <property type="protein sequence ID" value="AT4G29460.1"/>
    <property type="gene ID" value="AT4G29460"/>
</dbReference>
<dbReference type="KEGG" id="ath:AT4G29460"/>
<dbReference type="Araport" id="AT4G29460"/>
<dbReference type="TAIR" id="AT4G29460">
    <property type="gene designation" value="PLA2-GAMMA"/>
</dbReference>
<dbReference type="eggNOG" id="ENOG502RZIE">
    <property type="taxonomic scope" value="Eukaryota"/>
</dbReference>
<dbReference type="HOGENOM" id="CLU_115623_1_0_1"/>
<dbReference type="InParanoid" id="Q9M0D7"/>
<dbReference type="OMA" id="CIAQNCN"/>
<dbReference type="OrthoDB" id="566013at2759"/>
<dbReference type="PhylomeDB" id="Q9M0D7"/>
<dbReference type="BioCyc" id="ARA:AT4G29460-MONOMER"/>
<dbReference type="BioCyc" id="MetaCyc:AT4G29460-MONOMER"/>
<dbReference type="BRENDA" id="3.1.1.4">
    <property type="organism ID" value="399"/>
</dbReference>
<dbReference type="PRO" id="PR:Q9M0D7"/>
<dbReference type="Proteomes" id="UP000006548">
    <property type="component" value="Chromosome 4"/>
</dbReference>
<dbReference type="ExpressionAtlas" id="Q9M0D7">
    <property type="expression patterns" value="baseline and differential"/>
</dbReference>
<dbReference type="GO" id="GO:0005783">
    <property type="term" value="C:endoplasmic reticulum"/>
    <property type="evidence" value="ECO:0000314"/>
    <property type="project" value="TAIR"/>
</dbReference>
<dbReference type="GO" id="GO:0005576">
    <property type="term" value="C:extracellular region"/>
    <property type="evidence" value="ECO:0007669"/>
    <property type="project" value="UniProtKB-SubCell"/>
</dbReference>
<dbReference type="GO" id="GO:0005794">
    <property type="term" value="C:Golgi apparatus"/>
    <property type="evidence" value="ECO:0000314"/>
    <property type="project" value="TAIR"/>
</dbReference>
<dbReference type="GO" id="GO:0046872">
    <property type="term" value="F:metal ion binding"/>
    <property type="evidence" value="ECO:0007669"/>
    <property type="project" value="UniProtKB-KW"/>
</dbReference>
<dbReference type="GO" id="GO:0004623">
    <property type="term" value="F:phospholipase A2 activity"/>
    <property type="evidence" value="ECO:0000314"/>
    <property type="project" value="UniProtKB"/>
</dbReference>
<dbReference type="GO" id="GO:0050482">
    <property type="term" value="P:arachidonate secretion"/>
    <property type="evidence" value="ECO:0007669"/>
    <property type="project" value="InterPro"/>
</dbReference>
<dbReference type="GO" id="GO:0016042">
    <property type="term" value="P:lipid catabolic process"/>
    <property type="evidence" value="ECO:0007669"/>
    <property type="project" value="UniProtKB-KW"/>
</dbReference>
<dbReference type="GO" id="GO:0006644">
    <property type="term" value="P:phospholipid metabolic process"/>
    <property type="evidence" value="ECO:0007669"/>
    <property type="project" value="InterPro"/>
</dbReference>
<dbReference type="GO" id="GO:0009555">
    <property type="term" value="P:pollen development"/>
    <property type="evidence" value="ECO:0000315"/>
    <property type="project" value="TAIR"/>
</dbReference>
<dbReference type="GO" id="GO:0009846">
    <property type="term" value="P:pollen germination"/>
    <property type="evidence" value="ECO:0000314"/>
    <property type="project" value="UniProtKB"/>
</dbReference>
<dbReference type="GO" id="GO:0009860">
    <property type="term" value="P:pollen tube growth"/>
    <property type="evidence" value="ECO:0000314"/>
    <property type="project" value="UniProtKB"/>
</dbReference>
<dbReference type="CDD" id="cd04706">
    <property type="entry name" value="PLA2_plant"/>
    <property type="match status" value="1"/>
</dbReference>
<dbReference type="FunFam" id="1.20.90.10:FF:000005">
    <property type="entry name" value="Secretory phospholipase A2"/>
    <property type="match status" value="1"/>
</dbReference>
<dbReference type="Gene3D" id="1.20.90.10">
    <property type="entry name" value="Phospholipase A2 domain"/>
    <property type="match status" value="1"/>
</dbReference>
<dbReference type="InterPro" id="IPR036444">
    <property type="entry name" value="PLipase_A2_dom_sf"/>
</dbReference>
<dbReference type="InterPro" id="IPR033113">
    <property type="entry name" value="PLipase_A2_His_AS"/>
</dbReference>
<dbReference type="SUPFAM" id="SSF48619">
    <property type="entry name" value="Phospholipase A2, PLA2"/>
    <property type="match status" value="1"/>
</dbReference>
<dbReference type="PROSITE" id="PS00118">
    <property type="entry name" value="PA2_HIS"/>
    <property type="match status" value="1"/>
</dbReference>
<comment type="function">
    <text evidence="4 6">PA2 catalyzes the calcium-dependent hydrolysis of the 2-acyl groups in 3-sn-phosphoglycerides. Releases lysophospholipids (LPLs) and free fatty acids (FFAs) from membrane phospholipids in response to hormones and other external stimuli. Plays a role in pollen development and germination and tube growth.</text>
</comment>
<comment type="catalytic activity">
    <reaction evidence="3 4">
        <text>a 1,2-diacyl-sn-glycero-3-phosphocholine + H2O = a 1-acyl-sn-glycero-3-phosphocholine + a fatty acid + H(+)</text>
        <dbReference type="Rhea" id="RHEA:15801"/>
        <dbReference type="ChEBI" id="CHEBI:15377"/>
        <dbReference type="ChEBI" id="CHEBI:15378"/>
        <dbReference type="ChEBI" id="CHEBI:28868"/>
        <dbReference type="ChEBI" id="CHEBI:57643"/>
        <dbReference type="ChEBI" id="CHEBI:58168"/>
        <dbReference type="EC" id="3.1.1.4"/>
    </reaction>
</comment>
<comment type="cofactor">
    <cofactor>
        <name>Ca(2+)</name>
        <dbReference type="ChEBI" id="CHEBI:29108"/>
    </cofactor>
    <text>Binds 1 Ca(2+) ion per subunit.</text>
</comment>
<comment type="subcellular location">
    <subcellularLocation>
        <location>Secreted</location>
    </subcellularLocation>
    <subcellularLocation>
        <location>Golgi apparatus</location>
        <location>trans-Golgi network</location>
    </subcellularLocation>
    <subcellularLocation>
        <location>Endoplasmic reticulum</location>
    </subcellularLocation>
</comment>
<comment type="tissue specificity">
    <text evidence="4 5 6">Strongly expressed in mature flowers but weakly expressed in other tissues. Detected in buds, open flowers and in pollen.</text>
</comment>
<comment type="developmental stage">
    <text evidence="6">Expressed during pollen germination and tube growth.</text>
</comment>
<comment type="miscellaneous">
    <text>The enzyme has a slight preference for phosphatidylethanolamine over phosphatidylcholine.</text>
</comment>
<comment type="similarity">
    <text evidence="7">Belongs to the phospholipase A2 family.</text>
</comment>
<protein>
    <recommendedName>
        <fullName>Phospholipase A2-gamma</fullName>
        <ecNumber>3.1.1.4</ecNumber>
    </recommendedName>
    <alternativeName>
        <fullName>Secretory phospholipase A2-gamma</fullName>
        <shortName>AtsPLA2-gamma</shortName>
    </alternativeName>
</protein>
<evidence type="ECO:0000250" key="1"/>
<evidence type="ECO:0000255" key="2"/>
<evidence type="ECO:0000255" key="3">
    <source>
        <dbReference type="PROSITE-ProRule" id="PRU10035"/>
    </source>
</evidence>
<evidence type="ECO:0000269" key="4">
    <source>
    </source>
</evidence>
<evidence type="ECO:0000269" key="5">
    <source>
    </source>
</evidence>
<evidence type="ECO:0000269" key="6">
    <source>
    </source>
</evidence>
<evidence type="ECO:0000305" key="7"/>
<feature type="signal peptide" evidence="2">
    <location>
        <begin position="1"/>
        <end position="25"/>
    </location>
</feature>
<feature type="chain" id="PRO_0000417563" description="Phospholipase A2-gamma">
    <location>
        <begin position="26"/>
        <end position="187"/>
    </location>
</feature>
<feature type="active site" evidence="3">
    <location>
        <position position="72"/>
    </location>
</feature>
<feature type="binding site" evidence="1">
    <location>
        <position position="48"/>
    </location>
    <ligand>
        <name>Ca(2+)</name>
        <dbReference type="ChEBI" id="CHEBI:29108"/>
    </ligand>
</feature>
<feature type="binding site" evidence="1">
    <location>
        <position position="50"/>
    </location>
    <ligand>
        <name>Ca(2+)</name>
        <dbReference type="ChEBI" id="CHEBI:29108"/>
    </ligand>
</feature>
<feature type="binding site" evidence="1">
    <location>
        <position position="53"/>
    </location>
    <ligand>
        <name>Ca(2+)</name>
        <dbReference type="ChEBI" id="CHEBI:29108"/>
    </ligand>
</feature>
<feature type="binding site" evidence="1">
    <location>
        <position position="73"/>
    </location>
    <ligand>
        <name>Ca(2+)</name>
        <dbReference type="ChEBI" id="CHEBI:29108"/>
    </ligand>
</feature>
<feature type="disulfide bond" evidence="1">
    <location>
        <begin position="29"/>
        <end position="56"/>
    </location>
</feature>
<feature type="disulfide bond" evidence="1">
    <location>
        <begin position="33"/>
        <end position="62"/>
    </location>
</feature>
<feature type="disulfide bond" evidence="1">
    <location>
        <begin position="38"/>
        <end position="115"/>
    </location>
</feature>
<feature type="disulfide bond" evidence="1">
    <location>
        <begin position="49"/>
        <end position="69"/>
    </location>
</feature>
<feature type="disulfide bond" evidence="1">
    <location>
        <begin position="68"/>
        <end position="93"/>
    </location>
</feature>
<feature type="disulfide bond" evidence="1">
    <location>
        <begin position="75"/>
        <end position="86"/>
    </location>
</feature>
<organism>
    <name type="scientific">Arabidopsis thaliana</name>
    <name type="common">Mouse-ear cress</name>
    <dbReference type="NCBI Taxonomy" id="3702"/>
    <lineage>
        <taxon>Eukaryota</taxon>
        <taxon>Viridiplantae</taxon>
        <taxon>Streptophyta</taxon>
        <taxon>Embryophyta</taxon>
        <taxon>Tracheophyta</taxon>
        <taxon>Spermatophyta</taxon>
        <taxon>Magnoliopsida</taxon>
        <taxon>eudicotyledons</taxon>
        <taxon>Gunneridae</taxon>
        <taxon>Pentapetalae</taxon>
        <taxon>rosids</taxon>
        <taxon>malvids</taxon>
        <taxon>Brassicales</taxon>
        <taxon>Brassicaceae</taxon>
        <taxon>Camelineae</taxon>
        <taxon>Arabidopsis</taxon>
    </lineage>
</organism>
<accession>Q9M0D7</accession>
<sequence>MITGLALSRVAFGLTAFLLLAVVSSQEKCSNTCIAQNCNSLGIRYGKYCGIGYFGCPGEPPCDDLDACCMTHDNCVDLKGMTYVNCHKQFKRCVNKLSKSIKHSNGEKIGFSTQCPYSIVIPTVFNGMDYGIFFSGIGNIFNPPVLGSVPVVEVDLARSKVDTKDGLGTKLGLQTKEGSKVSASLNI</sequence>
<proteinExistence type="evidence at protein level"/>
<reference key="1">
    <citation type="journal article" date="2003" name="FEBS Lett.">
        <title>Characterization of Arabidopsis secretory phospholipase A2-gamma cDNA and its enzymatic properties.</title>
        <authorList>
            <person name="Bahn S.C."/>
            <person name="Lee H.Y."/>
            <person name="Kim H.J."/>
            <person name="Ryu S.B."/>
            <person name="Shin J.S."/>
        </authorList>
    </citation>
    <scope>NUCLEOTIDE SEQUENCE [MRNA]</scope>
    <scope>CATALYTIC ACTIVITY</scope>
    <scope>FUNCTION</scope>
    <scope>TISSUE SPECIFICITY</scope>
    <scope>SUBCELLULAR LOCATION</scope>
</reference>
<reference key="2">
    <citation type="journal article" date="1999" name="Nature">
        <title>Sequence and analysis of chromosome 4 of the plant Arabidopsis thaliana.</title>
        <authorList>
            <person name="Mayer K.F.X."/>
            <person name="Schueller C."/>
            <person name="Wambutt R."/>
            <person name="Murphy G."/>
            <person name="Volckaert G."/>
            <person name="Pohl T."/>
            <person name="Duesterhoeft A."/>
            <person name="Stiekema W."/>
            <person name="Entian K.-D."/>
            <person name="Terryn N."/>
            <person name="Harris B."/>
            <person name="Ansorge W."/>
            <person name="Brandt P."/>
            <person name="Grivell L.A."/>
            <person name="Rieger M."/>
            <person name="Weichselgartner M."/>
            <person name="de Simone V."/>
            <person name="Obermaier B."/>
            <person name="Mache R."/>
            <person name="Mueller M."/>
            <person name="Kreis M."/>
            <person name="Delseny M."/>
            <person name="Puigdomenech P."/>
            <person name="Watson M."/>
            <person name="Schmidtheini T."/>
            <person name="Reichert B."/>
            <person name="Portetelle D."/>
            <person name="Perez-Alonso M."/>
            <person name="Boutry M."/>
            <person name="Bancroft I."/>
            <person name="Vos P."/>
            <person name="Hoheisel J."/>
            <person name="Zimmermann W."/>
            <person name="Wedler H."/>
            <person name="Ridley P."/>
            <person name="Langham S.-A."/>
            <person name="McCullagh B."/>
            <person name="Bilham L."/>
            <person name="Robben J."/>
            <person name="van der Schueren J."/>
            <person name="Grymonprez B."/>
            <person name="Chuang Y.-J."/>
            <person name="Vandenbussche F."/>
            <person name="Braeken M."/>
            <person name="Weltjens I."/>
            <person name="Voet M."/>
            <person name="Bastiaens I."/>
            <person name="Aert R."/>
            <person name="Defoor E."/>
            <person name="Weitzenegger T."/>
            <person name="Bothe G."/>
            <person name="Ramsperger U."/>
            <person name="Hilbert H."/>
            <person name="Braun M."/>
            <person name="Holzer E."/>
            <person name="Brandt A."/>
            <person name="Peters S."/>
            <person name="van Staveren M."/>
            <person name="Dirkse W."/>
            <person name="Mooijman P."/>
            <person name="Klein Lankhorst R."/>
            <person name="Rose M."/>
            <person name="Hauf J."/>
            <person name="Koetter P."/>
            <person name="Berneiser S."/>
            <person name="Hempel S."/>
            <person name="Feldpausch M."/>
            <person name="Lamberth S."/>
            <person name="Van den Daele H."/>
            <person name="De Keyser A."/>
            <person name="Buysshaert C."/>
            <person name="Gielen J."/>
            <person name="Villarroel R."/>
            <person name="De Clercq R."/>
            <person name="van Montagu M."/>
            <person name="Rogers J."/>
            <person name="Cronin A."/>
            <person name="Quail M.A."/>
            <person name="Bray-Allen S."/>
            <person name="Clark L."/>
            <person name="Doggett J."/>
            <person name="Hall S."/>
            <person name="Kay M."/>
            <person name="Lennard N."/>
            <person name="McLay K."/>
            <person name="Mayes R."/>
            <person name="Pettett A."/>
            <person name="Rajandream M.A."/>
            <person name="Lyne M."/>
            <person name="Benes V."/>
            <person name="Rechmann S."/>
            <person name="Borkova D."/>
            <person name="Bloecker H."/>
            <person name="Scharfe M."/>
            <person name="Grimm M."/>
            <person name="Loehnert T.-H."/>
            <person name="Dose S."/>
            <person name="de Haan M."/>
            <person name="Maarse A.C."/>
            <person name="Schaefer M."/>
            <person name="Mueller-Auer S."/>
            <person name="Gabel C."/>
            <person name="Fuchs M."/>
            <person name="Fartmann B."/>
            <person name="Granderath K."/>
            <person name="Dauner D."/>
            <person name="Herzl A."/>
            <person name="Neumann S."/>
            <person name="Argiriou A."/>
            <person name="Vitale D."/>
            <person name="Liguori R."/>
            <person name="Piravandi E."/>
            <person name="Massenet O."/>
            <person name="Quigley F."/>
            <person name="Clabauld G."/>
            <person name="Muendlein A."/>
            <person name="Felber R."/>
            <person name="Schnabl S."/>
            <person name="Hiller R."/>
            <person name="Schmidt W."/>
            <person name="Lecharny A."/>
            <person name="Aubourg S."/>
            <person name="Chefdor F."/>
            <person name="Cooke R."/>
            <person name="Berger C."/>
            <person name="Monfort A."/>
            <person name="Casacuberta E."/>
            <person name="Gibbons T."/>
            <person name="Weber N."/>
            <person name="Vandenbol M."/>
            <person name="Bargues M."/>
            <person name="Terol J."/>
            <person name="Torres A."/>
            <person name="Perez-Perez A."/>
            <person name="Purnelle B."/>
            <person name="Bent E."/>
            <person name="Johnson S."/>
            <person name="Tacon D."/>
            <person name="Jesse T."/>
            <person name="Heijnen L."/>
            <person name="Schwarz S."/>
            <person name="Scholler P."/>
            <person name="Heber S."/>
            <person name="Francs P."/>
            <person name="Bielke C."/>
            <person name="Frishman D."/>
            <person name="Haase D."/>
            <person name="Lemcke K."/>
            <person name="Mewes H.-W."/>
            <person name="Stocker S."/>
            <person name="Zaccaria P."/>
            <person name="Bevan M."/>
            <person name="Wilson R.K."/>
            <person name="de la Bastide M."/>
            <person name="Habermann K."/>
            <person name="Parnell L."/>
            <person name="Dedhia N."/>
            <person name="Gnoj L."/>
            <person name="Schutz K."/>
            <person name="Huang E."/>
            <person name="Spiegel L."/>
            <person name="Sekhon M."/>
            <person name="Murray J."/>
            <person name="Sheet P."/>
            <person name="Cordes M."/>
            <person name="Abu-Threideh J."/>
            <person name="Stoneking T."/>
            <person name="Kalicki J."/>
            <person name="Graves T."/>
            <person name="Harmon G."/>
            <person name="Edwards J."/>
            <person name="Latreille P."/>
            <person name="Courtney L."/>
            <person name="Cloud J."/>
            <person name="Abbott A."/>
            <person name="Scott K."/>
            <person name="Johnson D."/>
            <person name="Minx P."/>
            <person name="Bentley D."/>
            <person name="Fulton B."/>
            <person name="Miller N."/>
            <person name="Greco T."/>
            <person name="Kemp K."/>
            <person name="Kramer J."/>
            <person name="Fulton L."/>
            <person name="Mardis E."/>
            <person name="Dante M."/>
            <person name="Pepin K."/>
            <person name="Hillier L.W."/>
            <person name="Nelson J."/>
            <person name="Spieth J."/>
            <person name="Ryan E."/>
            <person name="Andrews S."/>
            <person name="Geisel C."/>
            <person name="Layman D."/>
            <person name="Du H."/>
            <person name="Ali J."/>
            <person name="Berghoff A."/>
            <person name="Jones K."/>
            <person name="Drone K."/>
            <person name="Cotton M."/>
            <person name="Joshu C."/>
            <person name="Antonoiu B."/>
            <person name="Zidanic M."/>
            <person name="Strong C."/>
            <person name="Sun H."/>
            <person name="Lamar B."/>
            <person name="Yordan C."/>
            <person name="Ma P."/>
            <person name="Zhong J."/>
            <person name="Preston R."/>
            <person name="Vil D."/>
            <person name="Shekher M."/>
            <person name="Matero A."/>
            <person name="Shah R."/>
            <person name="Swaby I.K."/>
            <person name="O'Shaughnessy A."/>
            <person name="Rodriguez M."/>
            <person name="Hoffman J."/>
            <person name="Till S."/>
            <person name="Granat S."/>
            <person name="Shohdy N."/>
            <person name="Hasegawa A."/>
            <person name="Hameed A."/>
            <person name="Lodhi M."/>
            <person name="Johnson A."/>
            <person name="Chen E."/>
            <person name="Marra M.A."/>
            <person name="Martienssen R."/>
            <person name="McCombie W.R."/>
        </authorList>
    </citation>
    <scope>NUCLEOTIDE SEQUENCE [LARGE SCALE GENOMIC DNA]</scope>
    <source>
        <strain>cv. Columbia</strain>
    </source>
</reference>
<reference key="3">
    <citation type="journal article" date="2017" name="Plant J.">
        <title>Araport11: a complete reannotation of the Arabidopsis thaliana reference genome.</title>
        <authorList>
            <person name="Cheng C.Y."/>
            <person name="Krishnakumar V."/>
            <person name="Chan A.P."/>
            <person name="Thibaud-Nissen F."/>
            <person name="Schobel S."/>
            <person name="Town C.D."/>
        </authorList>
    </citation>
    <scope>GENOME REANNOTATION</scope>
    <source>
        <strain>cv. Columbia</strain>
    </source>
</reference>
<reference key="4">
    <citation type="journal article" date="2004" name="Trends Plant Sci.">
        <title>Phospholipid-derived signaling mediated by phospholipase A in plants.</title>
        <authorList>
            <person name="Ryu S.B."/>
        </authorList>
    </citation>
    <scope>GENE FAMILY</scope>
    <scope>NOMENCLATURE</scope>
</reference>
<reference key="5">
    <citation type="journal article" date="2005" name="Prog. Lipid Res.">
        <title>Multiple forms of secretory phospholipase A2 in plants.</title>
        <authorList>
            <person name="Lee H.Y."/>
            <person name="Bahn S.C."/>
            <person name="Shin J.S."/>
            <person name="Hwang I."/>
            <person name="Back K."/>
            <person name="Doelling J.H."/>
            <person name="Ryu S.B."/>
        </authorList>
    </citation>
    <scope>TISSUE SPECIFICITY</scope>
</reference>
<reference key="6">
    <citation type="journal article" date="2011" name="Plant Cell">
        <title>Endoplasmic reticulum- and Golgi-localized phospholipase A2 plays critical roles in Arabidopsis pollen development and germination.</title>
        <authorList>
            <person name="Kim H.J."/>
            <person name="Ok S.H."/>
            <person name="Bahn S.C."/>
            <person name="Jang J."/>
            <person name="Oh S.A."/>
            <person name="Park S.K."/>
            <person name="Twell D."/>
            <person name="Ryu S.B."/>
            <person name="Shin J.S."/>
        </authorList>
    </citation>
    <scope>FUNCTION</scope>
    <scope>TISSUE SPECIFICITY</scope>
    <scope>SUBCELLULAR LOCATION</scope>
    <scope>DEVELOPMENTAL STAGE</scope>
</reference>